<dbReference type="EC" id="4.2.1.19" evidence="1"/>
<dbReference type="EMBL" id="CP001043">
    <property type="protein sequence ID" value="ACC71929.1"/>
    <property type="molecule type" value="Genomic_DNA"/>
</dbReference>
<dbReference type="RefSeq" id="WP_012402127.1">
    <property type="nucleotide sequence ID" value="NC_010622.1"/>
</dbReference>
<dbReference type="SMR" id="B2JHY3"/>
<dbReference type="STRING" id="391038.Bphy_2757"/>
<dbReference type="KEGG" id="bph:Bphy_2757"/>
<dbReference type="eggNOG" id="COG0131">
    <property type="taxonomic scope" value="Bacteria"/>
</dbReference>
<dbReference type="HOGENOM" id="CLU_044308_2_0_4"/>
<dbReference type="OrthoDB" id="9790411at2"/>
<dbReference type="UniPathway" id="UPA00031">
    <property type="reaction ID" value="UER00011"/>
</dbReference>
<dbReference type="Proteomes" id="UP000001192">
    <property type="component" value="Chromosome 1"/>
</dbReference>
<dbReference type="GO" id="GO:0005737">
    <property type="term" value="C:cytoplasm"/>
    <property type="evidence" value="ECO:0007669"/>
    <property type="project" value="UniProtKB-SubCell"/>
</dbReference>
<dbReference type="GO" id="GO:0004424">
    <property type="term" value="F:imidazoleglycerol-phosphate dehydratase activity"/>
    <property type="evidence" value="ECO:0007669"/>
    <property type="project" value="UniProtKB-UniRule"/>
</dbReference>
<dbReference type="GO" id="GO:0000105">
    <property type="term" value="P:L-histidine biosynthetic process"/>
    <property type="evidence" value="ECO:0007669"/>
    <property type="project" value="UniProtKB-UniRule"/>
</dbReference>
<dbReference type="CDD" id="cd07914">
    <property type="entry name" value="IGPD"/>
    <property type="match status" value="1"/>
</dbReference>
<dbReference type="FunFam" id="3.30.230.40:FF:000002">
    <property type="entry name" value="Imidazoleglycerol-phosphate dehydratase"/>
    <property type="match status" value="1"/>
</dbReference>
<dbReference type="FunFam" id="3.30.230.40:FF:000003">
    <property type="entry name" value="Imidazoleglycerol-phosphate dehydratase HisB"/>
    <property type="match status" value="1"/>
</dbReference>
<dbReference type="Gene3D" id="3.30.230.40">
    <property type="entry name" value="Imidazole glycerol phosphate dehydratase, domain 1"/>
    <property type="match status" value="2"/>
</dbReference>
<dbReference type="HAMAP" id="MF_00076">
    <property type="entry name" value="HisB"/>
    <property type="match status" value="1"/>
</dbReference>
<dbReference type="InterPro" id="IPR038494">
    <property type="entry name" value="IGPD_sf"/>
</dbReference>
<dbReference type="InterPro" id="IPR000807">
    <property type="entry name" value="ImidazoleglycerolP_deHydtase"/>
</dbReference>
<dbReference type="InterPro" id="IPR020565">
    <property type="entry name" value="ImidazoleglycerP_deHydtase_CS"/>
</dbReference>
<dbReference type="InterPro" id="IPR020568">
    <property type="entry name" value="Ribosomal_Su5_D2-typ_SF"/>
</dbReference>
<dbReference type="NCBIfam" id="NF002106">
    <property type="entry name" value="PRK00951.1-1"/>
    <property type="match status" value="1"/>
</dbReference>
<dbReference type="NCBIfam" id="NF002109">
    <property type="entry name" value="PRK00951.1-5"/>
    <property type="match status" value="1"/>
</dbReference>
<dbReference type="NCBIfam" id="NF002111">
    <property type="entry name" value="PRK00951.2-1"/>
    <property type="match status" value="1"/>
</dbReference>
<dbReference type="NCBIfam" id="NF002114">
    <property type="entry name" value="PRK00951.2-4"/>
    <property type="match status" value="1"/>
</dbReference>
<dbReference type="PANTHER" id="PTHR23133:SF2">
    <property type="entry name" value="IMIDAZOLEGLYCEROL-PHOSPHATE DEHYDRATASE"/>
    <property type="match status" value="1"/>
</dbReference>
<dbReference type="PANTHER" id="PTHR23133">
    <property type="entry name" value="IMIDAZOLEGLYCEROL-PHOSPHATE DEHYDRATASE HIS7"/>
    <property type="match status" value="1"/>
</dbReference>
<dbReference type="Pfam" id="PF00475">
    <property type="entry name" value="IGPD"/>
    <property type="match status" value="1"/>
</dbReference>
<dbReference type="SUPFAM" id="SSF54211">
    <property type="entry name" value="Ribosomal protein S5 domain 2-like"/>
    <property type="match status" value="2"/>
</dbReference>
<dbReference type="PROSITE" id="PS00954">
    <property type="entry name" value="IGP_DEHYDRATASE_1"/>
    <property type="match status" value="1"/>
</dbReference>
<dbReference type="PROSITE" id="PS00955">
    <property type="entry name" value="IGP_DEHYDRATASE_2"/>
    <property type="match status" value="1"/>
</dbReference>
<gene>
    <name evidence="1" type="primary">hisB</name>
    <name type="ordered locus">Bphy_2757</name>
</gene>
<comment type="catalytic activity">
    <reaction evidence="1">
        <text>D-erythro-1-(imidazol-4-yl)glycerol 3-phosphate = 3-(imidazol-4-yl)-2-oxopropyl phosphate + H2O</text>
        <dbReference type="Rhea" id="RHEA:11040"/>
        <dbReference type="ChEBI" id="CHEBI:15377"/>
        <dbReference type="ChEBI" id="CHEBI:57766"/>
        <dbReference type="ChEBI" id="CHEBI:58278"/>
        <dbReference type="EC" id="4.2.1.19"/>
    </reaction>
</comment>
<comment type="pathway">
    <text evidence="1">Amino-acid biosynthesis; L-histidine biosynthesis; L-histidine from 5-phospho-alpha-D-ribose 1-diphosphate: step 6/9.</text>
</comment>
<comment type="subcellular location">
    <subcellularLocation>
        <location evidence="1">Cytoplasm</location>
    </subcellularLocation>
</comment>
<comment type="similarity">
    <text evidence="1">Belongs to the imidazoleglycerol-phosphate dehydratase family.</text>
</comment>
<sequence length="195" mass="21551">MRLAEVVRNTSETQIRVKINLDGSGQQKLATGVPFLDHMLDQIARHGLIDLDIEAHGDTHIDDHHTVEDVGITLGQAIAKAVGDKKGIRRYGHSYVPLDEALSRVVIDFSGRPGLEFHVPFTRARIGTFDVDLSIEFFRGFVNHAGVTLHIDNLRGLNAHHQMETVFKAFGRALRMATELDERAAGQIPSTKGSL</sequence>
<organism>
    <name type="scientific">Paraburkholderia phymatum (strain DSM 17167 / CIP 108236 / LMG 21445 / STM815)</name>
    <name type="common">Burkholderia phymatum</name>
    <dbReference type="NCBI Taxonomy" id="391038"/>
    <lineage>
        <taxon>Bacteria</taxon>
        <taxon>Pseudomonadati</taxon>
        <taxon>Pseudomonadota</taxon>
        <taxon>Betaproteobacteria</taxon>
        <taxon>Burkholderiales</taxon>
        <taxon>Burkholderiaceae</taxon>
        <taxon>Paraburkholderia</taxon>
    </lineage>
</organism>
<name>HIS7_PARP8</name>
<proteinExistence type="inferred from homology"/>
<feature type="chain" id="PRO_1000092678" description="Imidazoleglycerol-phosphate dehydratase">
    <location>
        <begin position="1"/>
        <end position="195"/>
    </location>
</feature>
<accession>B2JHY3</accession>
<reference key="1">
    <citation type="journal article" date="2014" name="Stand. Genomic Sci.">
        <title>Complete genome sequence of Burkholderia phymatum STM815(T), a broad host range and efficient nitrogen-fixing symbiont of Mimosa species.</title>
        <authorList>
            <person name="Moulin L."/>
            <person name="Klonowska A."/>
            <person name="Caroline B."/>
            <person name="Booth K."/>
            <person name="Vriezen J.A."/>
            <person name="Melkonian R."/>
            <person name="James E.K."/>
            <person name="Young J.P."/>
            <person name="Bena G."/>
            <person name="Hauser L."/>
            <person name="Land M."/>
            <person name="Kyrpides N."/>
            <person name="Bruce D."/>
            <person name="Chain P."/>
            <person name="Copeland A."/>
            <person name="Pitluck S."/>
            <person name="Woyke T."/>
            <person name="Lizotte-Waniewski M."/>
            <person name="Bristow J."/>
            <person name="Riley M."/>
        </authorList>
    </citation>
    <scope>NUCLEOTIDE SEQUENCE [LARGE SCALE GENOMIC DNA]</scope>
    <source>
        <strain>DSM 17167 / CIP 108236 / LMG 21445 / STM815</strain>
    </source>
</reference>
<protein>
    <recommendedName>
        <fullName evidence="1">Imidazoleglycerol-phosphate dehydratase</fullName>
        <shortName evidence="1">IGPD</shortName>
        <ecNumber evidence="1">4.2.1.19</ecNumber>
    </recommendedName>
</protein>
<keyword id="KW-0028">Amino-acid biosynthesis</keyword>
<keyword id="KW-0963">Cytoplasm</keyword>
<keyword id="KW-0368">Histidine biosynthesis</keyword>
<keyword id="KW-0456">Lyase</keyword>
<keyword id="KW-1185">Reference proteome</keyword>
<evidence type="ECO:0000255" key="1">
    <source>
        <dbReference type="HAMAP-Rule" id="MF_00076"/>
    </source>
</evidence>